<geneLocation type="plasmid">
    <name>RRob</name>
</geneLocation>
<comment type="catalytic activity">
    <reaction evidence="3">
        <text>a beta-lactam + H2O = a substituted beta-amino acid</text>
        <dbReference type="Rhea" id="RHEA:20401"/>
        <dbReference type="ChEBI" id="CHEBI:15377"/>
        <dbReference type="ChEBI" id="CHEBI:35627"/>
        <dbReference type="ChEBI" id="CHEBI:140347"/>
        <dbReference type="EC" id="3.5.2.6"/>
    </reaction>
</comment>
<comment type="miscellaneous">
    <text evidence="5">The class A beta-lactamase family has a specific amino-acid numbering system, sometimes called Ambler or ABL numbering and often misspelt as Amber. A multiple sequence alignment was used to derive a consensus sequence and then the consensus was numbered taking into account insertions and deletions. This allows use of identical numbers, e.g. for active site residues, despite differences in protein length. UniProt always uses natural numbering of residues, hence there appear to be differences in numbering between this entry and some papers.</text>
</comment>
<comment type="similarity">
    <text evidence="4">Belongs to the class-A beta-lactamase family.</text>
</comment>
<sequence>MLNKLKIGTLLLLTLTACSPNSVHSVTSNPQPASAPVQQSATQATFQQTLANLEQQYQARIGVYVWDTETGHSLSYRADERFAYASTFKALLAGAVLQSLPEKDLNRTISYSQKDLVSYSPETQKYVGKGMTIAQLCEAAVRFSDNSATNLLLKELGGVEQYQRILRQLGDNVTHTNRLEPDLNQAKPNDIRDTSTPKQMAMNLNAYLLGNTLTESQKTILWNWLDNNATGNPLIRAATPTSWKVYDKSGAGKYGVRNDIAVVRIPNRKPIVMAIMSTQFTEEAKFNNKLVEDAAKQVFHTLQLN</sequence>
<dbReference type="EC" id="3.5.2.6"/>
<dbReference type="EMBL" id="AF022114">
    <property type="protein sequence ID" value="AAB72007.1"/>
    <property type="molecule type" value="Genomic_DNA"/>
</dbReference>
<dbReference type="PIR" id="A60680">
    <property type="entry name" value="A60680"/>
</dbReference>
<dbReference type="RefSeq" id="YP_004074575.1">
    <property type="nucleotide sequence ID" value="NC_014813.1"/>
</dbReference>
<dbReference type="RefSeq" id="YP_006959620.1">
    <property type="nucleotide sequence ID" value="NC_019174.1"/>
</dbReference>
<dbReference type="RefSeq" id="YP_006959624.1">
    <property type="nucleotide sequence ID" value="NC_019175.1"/>
</dbReference>
<dbReference type="RefSeq" id="YP_006959628.1">
    <property type="nucleotide sequence ID" value="NC_019176.1"/>
</dbReference>
<dbReference type="RefSeq" id="YP_006959632.1">
    <property type="nucleotide sequence ID" value="NC_019177.1"/>
</dbReference>
<dbReference type="RefSeq" id="YP_006959636.1">
    <property type="nucleotide sequence ID" value="NC_019178.1"/>
</dbReference>
<dbReference type="SMR" id="P67918"/>
<dbReference type="GO" id="GO:0008800">
    <property type="term" value="F:beta-lactamase activity"/>
    <property type="evidence" value="ECO:0007669"/>
    <property type="project" value="UniProtKB-EC"/>
</dbReference>
<dbReference type="GO" id="GO:0030655">
    <property type="term" value="P:beta-lactam antibiotic catabolic process"/>
    <property type="evidence" value="ECO:0007669"/>
    <property type="project" value="InterPro"/>
</dbReference>
<dbReference type="GO" id="GO:0046677">
    <property type="term" value="P:response to antibiotic"/>
    <property type="evidence" value="ECO:0007669"/>
    <property type="project" value="UniProtKB-KW"/>
</dbReference>
<dbReference type="Gene3D" id="3.40.710.10">
    <property type="entry name" value="DD-peptidase/beta-lactamase superfamily"/>
    <property type="match status" value="1"/>
</dbReference>
<dbReference type="InterPro" id="IPR012338">
    <property type="entry name" value="Beta-lactam/transpept-like"/>
</dbReference>
<dbReference type="InterPro" id="IPR045155">
    <property type="entry name" value="Beta-lactam_cat"/>
</dbReference>
<dbReference type="InterPro" id="IPR000871">
    <property type="entry name" value="Beta-lactam_class-A"/>
</dbReference>
<dbReference type="InterPro" id="IPR023650">
    <property type="entry name" value="Beta-lactam_class-A_AS"/>
</dbReference>
<dbReference type="NCBIfam" id="NF033103">
    <property type="entry name" value="bla_class_A"/>
    <property type="match status" value="1"/>
</dbReference>
<dbReference type="NCBIfam" id="NF033568">
    <property type="entry name" value="blaROB"/>
    <property type="match status" value="1"/>
</dbReference>
<dbReference type="PANTHER" id="PTHR35333">
    <property type="entry name" value="BETA-LACTAMASE"/>
    <property type="match status" value="1"/>
</dbReference>
<dbReference type="PANTHER" id="PTHR35333:SF3">
    <property type="entry name" value="BETA-LACTAMASE-TYPE TRANSPEPTIDASE FOLD CONTAINING PROTEIN"/>
    <property type="match status" value="1"/>
</dbReference>
<dbReference type="Pfam" id="PF13354">
    <property type="entry name" value="Beta-lactamase2"/>
    <property type="match status" value="1"/>
</dbReference>
<dbReference type="PRINTS" id="PR00118">
    <property type="entry name" value="BLACTAMASEA"/>
</dbReference>
<dbReference type="SUPFAM" id="SSF56601">
    <property type="entry name" value="beta-lactamase/transpeptidase-like"/>
    <property type="match status" value="1"/>
</dbReference>
<dbReference type="PROSITE" id="PS00146">
    <property type="entry name" value="BETA_LACTAMASE_A"/>
    <property type="match status" value="1"/>
</dbReference>
<protein>
    <recommendedName>
        <fullName>Beta-lactamase ROB-1</fullName>
        <ecNumber>3.5.2.6</ecNumber>
    </recommendedName>
</protein>
<evidence type="ECO:0000250" key="1"/>
<evidence type="ECO:0000255" key="2"/>
<evidence type="ECO:0000255" key="3">
    <source>
        <dbReference type="PROSITE-ProRule" id="PRU10101"/>
    </source>
</evidence>
<evidence type="ECO:0000305" key="4"/>
<evidence type="ECO:0000305" key="5">
    <source>
    </source>
</evidence>
<keyword id="KW-0046">Antibiotic resistance</keyword>
<keyword id="KW-0378">Hydrolase</keyword>
<keyword id="KW-0614">Plasmid</keyword>
<keyword id="KW-0732">Signal</keyword>
<organism>
    <name type="scientific">Haemophilus influenzae</name>
    <dbReference type="NCBI Taxonomy" id="727"/>
    <lineage>
        <taxon>Bacteria</taxon>
        <taxon>Pseudomonadati</taxon>
        <taxon>Pseudomonadota</taxon>
        <taxon>Gammaproteobacteria</taxon>
        <taxon>Pasteurellales</taxon>
        <taxon>Pasteurellaceae</taxon>
        <taxon>Haemophilus</taxon>
    </lineage>
</organism>
<reference key="1">
    <citation type="journal article" date="1990" name="Antimicrob. Agents Chemother.">
        <title>Sequence analysis and evolutionary perspectives of ROB-1 beta-lactamase.</title>
        <authorList>
            <person name="Juteau J.-M."/>
            <person name="Levesque R.C."/>
        </authorList>
    </citation>
    <scope>NUCLEOTIDE SEQUENCE [GENOMIC DNA]</scope>
    <source>
        <strain>F990</strain>
        <plasmid>RRob</plasmid>
    </source>
</reference>
<reference key="2">
    <citation type="journal article" date="1991" name="Biochem. J.">
        <title>A standard numbering scheme for the class A beta-lactamases.</title>
        <authorList>
            <person name="Ambler R.P."/>
            <person name="Coulson A.F."/>
            <person name="Frere J.M."/>
            <person name="Ghuysen J.M."/>
            <person name="Joris B."/>
            <person name="Forsman M."/>
            <person name="Levesque R.C."/>
            <person name="Tiraby G."/>
            <person name="Waley S.G."/>
        </authorList>
    </citation>
    <scope>AMINO ACID NUMBERING SCHEME</scope>
</reference>
<accession>P67918</accession>
<accession>P33949</accession>
<name>BLA1_HAEIF</name>
<gene>
    <name type="primary">rob1</name>
    <name type="synonym">bla</name>
</gene>
<proteinExistence type="inferred from homology"/>
<feature type="signal peptide" evidence="2">
    <location>
        <begin position="1"/>
        <end position="33"/>
    </location>
</feature>
<feature type="chain" id="PRO_0000017040" description="Beta-lactamase ROB-1">
    <location>
        <begin position="34"/>
        <end position="305"/>
    </location>
</feature>
<feature type="active site" description="Acyl-ester intermediate" evidence="3">
    <location>
        <position position="86"/>
    </location>
</feature>
<feature type="binding site" evidence="1">
    <location>
        <begin position="248"/>
        <end position="250"/>
    </location>
    <ligand>
        <name>substrate</name>
    </ligand>
</feature>